<proteinExistence type="inferred from homology"/>
<reference key="1">
    <citation type="journal article" date="2006" name="BMC Plant Biol.">
        <title>The complete chloroplast genome sequence of Citrus sinensis (L.) Osbeck var 'Ridge Pineapple': organization and phylogenetic relationships to other angiosperms.</title>
        <authorList>
            <person name="Bausher M.G."/>
            <person name="Singh N.D."/>
            <person name="Lee S.-B."/>
            <person name="Jansen R.K."/>
            <person name="Daniell H."/>
        </authorList>
    </citation>
    <scope>NUCLEOTIDE SEQUENCE [LARGE SCALE GENOMIC DNA]</scope>
    <source>
        <strain>cv. Osbeck var. Ridge Pineapple</strain>
    </source>
</reference>
<accession>Q09MG5</accession>
<name>CYF_CITSI</name>
<dbReference type="EMBL" id="DQ864733">
    <property type="protein sequence ID" value="ABI49033.1"/>
    <property type="molecule type" value="Genomic_DNA"/>
</dbReference>
<dbReference type="RefSeq" id="YP_740488.1">
    <property type="nucleotide sequence ID" value="NC_008334.1"/>
</dbReference>
<dbReference type="SMR" id="Q09MG5"/>
<dbReference type="GeneID" id="4271218"/>
<dbReference type="KEGG" id="cit:4271218"/>
<dbReference type="OrthoDB" id="179406at71240"/>
<dbReference type="GO" id="GO:0009535">
    <property type="term" value="C:chloroplast thylakoid membrane"/>
    <property type="evidence" value="ECO:0007669"/>
    <property type="project" value="UniProtKB-SubCell"/>
</dbReference>
<dbReference type="GO" id="GO:0009055">
    <property type="term" value="F:electron transfer activity"/>
    <property type="evidence" value="ECO:0007669"/>
    <property type="project" value="UniProtKB-UniRule"/>
</dbReference>
<dbReference type="GO" id="GO:0020037">
    <property type="term" value="F:heme binding"/>
    <property type="evidence" value="ECO:0007669"/>
    <property type="project" value="InterPro"/>
</dbReference>
<dbReference type="GO" id="GO:0005506">
    <property type="term" value="F:iron ion binding"/>
    <property type="evidence" value="ECO:0007669"/>
    <property type="project" value="InterPro"/>
</dbReference>
<dbReference type="GO" id="GO:0015979">
    <property type="term" value="P:photosynthesis"/>
    <property type="evidence" value="ECO:0007669"/>
    <property type="project" value="UniProtKB-UniRule"/>
</dbReference>
<dbReference type="FunFam" id="1.20.5.700:FF:000001">
    <property type="entry name" value="Cytochrome f"/>
    <property type="match status" value="1"/>
</dbReference>
<dbReference type="FunFam" id="2.40.50.100:FF:000007">
    <property type="entry name" value="Cytochrome f"/>
    <property type="match status" value="1"/>
</dbReference>
<dbReference type="FunFam" id="2.60.40.830:FF:000001">
    <property type="entry name" value="Cytochrome f"/>
    <property type="match status" value="1"/>
</dbReference>
<dbReference type="Gene3D" id="2.40.50.100">
    <property type="match status" value="1"/>
</dbReference>
<dbReference type="Gene3D" id="2.60.40.830">
    <property type="entry name" value="Cytochrome f large domain"/>
    <property type="match status" value="1"/>
</dbReference>
<dbReference type="Gene3D" id="1.20.5.700">
    <property type="entry name" value="Single helix bin"/>
    <property type="match status" value="1"/>
</dbReference>
<dbReference type="HAMAP" id="MF_00610">
    <property type="entry name" value="Cytb6_f_cytF"/>
    <property type="match status" value="1"/>
</dbReference>
<dbReference type="InterPro" id="IPR024058">
    <property type="entry name" value="Cyt-f_TM"/>
</dbReference>
<dbReference type="InterPro" id="IPR002325">
    <property type="entry name" value="Cyt_f"/>
</dbReference>
<dbReference type="InterPro" id="IPR024094">
    <property type="entry name" value="Cyt_f_lg_dom"/>
</dbReference>
<dbReference type="InterPro" id="IPR036826">
    <property type="entry name" value="Cyt_f_lg_dom_sf"/>
</dbReference>
<dbReference type="InterPro" id="IPR011054">
    <property type="entry name" value="Rudment_hybrid_motif"/>
</dbReference>
<dbReference type="PANTHER" id="PTHR33288">
    <property type="match status" value="1"/>
</dbReference>
<dbReference type="PANTHER" id="PTHR33288:SF10">
    <property type="entry name" value="CYTOCHROME F"/>
    <property type="match status" value="1"/>
</dbReference>
<dbReference type="Pfam" id="PF01333">
    <property type="entry name" value="Apocytochr_F_C"/>
    <property type="match status" value="1"/>
</dbReference>
<dbReference type="Pfam" id="PF16639">
    <property type="entry name" value="Apocytochr_F_N"/>
    <property type="match status" value="1"/>
</dbReference>
<dbReference type="PRINTS" id="PR00610">
    <property type="entry name" value="CYTOCHROMEF"/>
</dbReference>
<dbReference type="SUPFAM" id="SSF103431">
    <property type="entry name" value="Cytochrome f subunit of the cytochrome b6f complex, transmembrane anchor"/>
    <property type="match status" value="1"/>
</dbReference>
<dbReference type="SUPFAM" id="SSF49441">
    <property type="entry name" value="Cytochrome f, large domain"/>
    <property type="match status" value="1"/>
</dbReference>
<dbReference type="SUPFAM" id="SSF51246">
    <property type="entry name" value="Rudiment single hybrid motif"/>
    <property type="match status" value="1"/>
</dbReference>
<dbReference type="PROSITE" id="PS51010">
    <property type="entry name" value="CYTF"/>
    <property type="match status" value="1"/>
</dbReference>
<keyword id="KW-0150">Chloroplast</keyword>
<keyword id="KW-0249">Electron transport</keyword>
<keyword id="KW-0349">Heme</keyword>
<keyword id="KW-0408">Iron</keyword>
<keyword id="KW-0472">Membrane</keyword>
<keyword id="KW-0479">Metal-binding</keyword>
<keyword id="KW-0602">Photosynthesis</keyword>
<keyword id="KW-0934">Plastid</keyword>
<keyword id="KW-0732">Signal</keyword>
<keyword id="KW-0793">Thylakoid</keyword>
<keyword id="KW-0812">Transmembrane</keyword>
<keyword id="KW-1133">Transmembrane helix</keyword>
<keyword id="KW-0813">Transport</keyword>
<organism>
    <name type="scientific">Citrus sinensis</name>
    <name type="common">Sweet orange</name>
    <name type="synonym">Citrus aurantium var. sinensis</name>
    <dbReference type="NCBI Taxonomy" id="2711"/>
    <lineage>
        <taxon>Eukaryota</taxon>
        <taxon>Viridiplantae</taxon>
        <taxon>Streptophyta</taxon>
        <taxon>Embryophyta</taxon>
        <taxon>Tracheophyta</taxon>
        <taxon>Spermatophyta</taxon>
        <taxon>Magnoliopsida</taxon>
        <taxon>eudicotyledons</taxon>
        <taxon>Gunneridae</taxon>
        <taxon>Pentapetalae</taxon>
        <taxon>rosids</taxon>
        <taxon>malvids</taxon>
        <taxon>Sapindales</taxon>
        <taxon>Rutaceae</taxon>
        <taxon>Aurantioideae</taxon>
        <taxon>Citrus</taxon>
    </lineage>
</organism>
<gene>
    <name evidence="2" type="primary">petA</name>
</gene>
<comment type="function">
    <text evidence="2">Component of the cytochrome b6-f complex, which mediates electron transfer between photosystem II (PSII) and photosystem I (PSI), cyclic electron flow around PSI, and state transitions.</text>
</comment>
<comment type="cofactor">
    <cofactor evidence="2">
        <name>heme</name>
        <dbReference type="ChEBI" id="CHEBI:30413"/>
    </cofactor>
    <text evidence="2">Binds 1 heme group covalently.</text>
</comment>
<comment type="subunit">
    <text evidence="1">The 4 large subunits of the cytochrome b6-f complex are cytochrome b6, subunit IV (17 kDa polypeptide, petD), cytochrome f and the Rieske protein, while the 4 small subunits are PetG, PetL, PetM and PetN. The complex functions as a dimer (By similarity).</text>
</comment>
<comment type="subcellular location">
    <subcellularLocation>
        <location evidence="2">Plastid</location>
        <location evidence="2">Chloroplast thylakoid membrane</location>
        <topology evidence="2">Single-pass membrane protein</topology>
    </subcellularLocation>
</comment>
<comment type="similarity">
    <text evidence="2">Belongs to the cytochrome f family.</text>
</comment>
<geneLocation type="chloroplast"/>
<feature type="signal peptide" evidence="2">
    <location>
        <begin position="1"/>
        <end position="35"/>
    </location>
</feature>
<feature type="chain" id="PRO_0000275403" description="Cytochrome f">
    <location>
        <begin position="36"/>
        <end position="320"/>
    </location>
</feature>
<feature type="transmembrane region" description="Helical" evidence="2">
    <location>
        <begin position="286"/>
        <end position="306"/>
    </location>
</feature>
<feature type="binding site" description="axial binding residue" evidence="2">
    <location>
        <position position="36"/>
    </location>
    <ligand>
        <name>heme</name>
        <dbReference type="ChEBI" id="CHEBI:30413"/>
    </ligand>
    <ligandPart>
        <name>Fe</name>
        <dbReference type="ChEBI" id="CHEBI:18248"/>
    </ligandPart>
</feature>
<feature type="binding site" description="covalent" evidence="2">
    <location>
        <position position="56"/>
    </location>
    <ligand>
        <name>heme</name>
        <dbReference type="ChEBI" id="CHEBI:30413"/>
    </ligand>
</feature>
<feature type="binding site" description="covalent" evidence="2">
    <location>
        <position position="59"/>
    </location>
    <ligand>
        <name>heme</name>
        <dbReference type="ChEBI" id="CHEBI:30413"/>
    </ligand>
</feature>
<feature type="binding site" description="axial binding residue" evidence="2">
    <location>
        <position position="60"/>
    </location>
    <ligand>
        <name>heme</name>
        <dbReference type="ChEBI" id="CHEBI:30413"/>
    </ligand>
    <ligandPart>
        <name>Fe</name>
        <dbReference type="ChEBI" id="CHEBI:18248"/>
    </ligandPart>
</feature>
<sequence length="320" mass="35197">MQIRNTFSSLKGEITRFISVSLMIYIITRASISNAYPIFAQQGFENPREATGRIVCANCHLANKPVDIEVPQAVLPDTVFEAVVRIPYDMQLKQVLANGKKGALNVGAVLILPEGFELAPPDRISPEMKEKIGKLSFQTYRPTKKNILVIGPVPGQKYSEITFPILSPNPATNKDAYFLKYPIYVGGNRGRGQIYPDGNKSNNTVYNATSAGIVSKIIRKEKGGYEITITDASNGREVVDIIPPGPELRVSEGQSIKLDQPLTSNPNVGGFGQADAEIVLQDPLRVQGLLFFLASVVLAQIFLVLKKKQFEKVQLSEMNF</sequence>
<evidence type="ECO:0000250" key="1"/>
<evidence type="ECO:0000255" key="2">
    <source>
        <dbReference type="HAMAP-Rule" id="MF_00610"/>
    </source>
</evidence>
<protein>
    <recommendedName>
        <fullName evidence="2">Cytochrome f</fullName>
    </recommendedName>
</protein>